<sequence>MSLDMQEWRAETTAIVNELLADGSNPDLEYDIEHHFACQDFDQLEKAAVDLFKAGFEVTDAEEMELDDGAPIFCFDATIERKLDIETIVADIEKMLPILKKYGVDYDGWGTYFQE</sequence>
<gene>
    <name evidence="1" type="primary">rraB</name>
    <name type="ordered locus">ASA_0850</name>
</gene>
<evidence type="ECO:0000255" key="1">
    <source>
        <dbReference type="HAMAP-Rule" id="MF_01888"/>
    </source>
</evidence>
<proteinExistence type="inferred from homology"/>
<protein>
    <recommendedName>
        <fullName evidence="1">Regulator of ribonuclease activity B</fullName>
    </recommendedName>
</protein>
<accession>A4SJC2</accession>
<keyword id="KW-0963">Cytoplasm</keyword>
<dbReference type="EMBL" id="CP000644">
    <property type="protein sequence ID" value="ABO88994.1"/>
    <property type="molecule type" value="Genomic_DNA"/>
</dbReference>
<dbReference type="RefSeq" id="WP_011898395.1">
    <property type="nucleotide sequence ID" value="NC_009348.1"/>
</dbReference>
<dbReference type="SMR" id="A4SJC2"/>
<dbReference type="STRING" id="29491.GCA_000820065_02327"/>
<dbReference type="GeneID" id="79878511"/>
<dbReference type="KEGG" id="asa:ASA_0850"/>
<dbReference type="eggNOG" id="COG3076">
    <property type="taxonomic scope" value="Bacteria"/>
</dbReference>
<dbReference type="HOGENOM" id="CLU_128640_0_0_6"/>
<dbReference type="Proteomes" id="UP000000225">
    <property type="component" value="Chromosome"/>
</dbReference>
<dbReference type="GO" id="GO:0005737">
    <property type="term" value="C:cytoplasm"/>
    <property type="evidence" value="ECO:0007669"/>
    <property type="project" value="UniProtKB-SubCell"/>
</dbReference>
<dbReference type="GO" id="GO:0060698">
    <property type="term" value="F:endoribonuclease inhibitor activity"/>
    <property type="evidence" value="ECO:0007669"/>
    <property type="project" value="UniProtKB-UniRule"/>
</dbReference>
<dbReference type="GO" id="GO:0019899">
    <property type="term" value="F:enzyme binding"/>
    <property type="evidence" value="ECO:0007669"/>
    <property type="project" value="UniProtKB-UniRule"/>
</dbReference>
<dbReference type="Gene3D" id="3.30.70.970">
    <property type="entry name" value="RraB-like"/>
    <property type="match status" value="1"/>
</dbReference>
<dbReference type="HAMAP" id="MF_01888">
    <property type="entry name" value="RraB"/>
    <property type="match status" value="1"/>
</dbReference>
<dbReference type="InterPro" id="IPR016716">
    <property type="entry name" value="RraB"/>
</dbReference>
<dbReference type="InterPro" id="IPR036701">
    <property type="entry name" value="RraB-like_sf"/>
</dbReference>
<dbReference type="InterPro" id="IPR009671">
    <property type="entry name" value="RraB_dom"/>
</dbReference>
<dbReference type="NCBIfam" id="NF008393">
    <property type="entry name" value="PRK11191.1"/>
    <property type="match status" value="1"/>
</dbReference>
<dbReference type="Pfam" id="PF06877">
    <property type="entry name" value="RraB"/>
    <property type="match status" value="1"/>
</dbReference>
<dbReference type="PIRSF" id="PIRSF018193">
    <property type="entry name" value="UCP018193"/>
    <property type="match status" value="1"/>
</dbReference>
<dbReference type="SUPFAM" id="SSF89946">
    <property type="entry name" value="Hypothetical protein VC0424"/>
    <property type="match status" value="1"/>
</dbReference>
<organism>
    <name type="scientific">Aeromonas salmonicida (strain A449)</name>
    <dbReference type="NCBI Taxonomy" id="382245"/>
    <lineage>
        <taxon>Bacteria</taxon>
        <taxon>Pseudomonadati</taxon>
        <taxon>Pseudomonadota</taxon>
        <taxon>Gammaproteobacteria</taxon>
        <taxon>Aeromonadales</taxon>
        <taxon>Aeromonadaceae</taxon>
        <taxon>Aeromonas</taxon>
    </lineage>
</organism>
<reference key="1">
    <citation type="journal article" date="2008" name="BMC Genomics">
        <title>The genome of Aeromonas salmonicida subsp. salmonicida A449: insights into the evolution of a fish pathogen.</title>
        <authorList>
            <person name="Reith M.E."/>
            <person name="Singh R.K."/>
            <person name="Curtis B."/>
            <person name="Boyd J.M."/>
            <person name="Bouevitch A."/>
            <person name="Kimball J."/>
            <person name="Munholland J."/>
            <person name="Murphy C."/>
            <person name="Sarty D."/>
            <person name="Williams J."/>
            <person name="Nash J.H."/>
            <person name="Johnson S.C."/>
            <person name="Brown L.L."/>
        </authorList>
    </citation>
    <scope>NUCLEOTIDE SEQUENCE [LARGE SCALE GENOMIC DNA]</scope>
    <source>
        <strain>A449</strain>
    </source>
</reference>
<feature type="chain" id="PRO_0000404303" description="Regulator of ribonuclease activity B">
    <location>
        <begin position="1"/>
        <end position="115"/>
    </location>
</feature>
<name>RRAB_AERS4</name>
<comment type="function">
    <text evidence="1">Globally modulates RNA abundance by binding to RNase E (Rne) and regulating its endonucleolytic activity. Can modulate Rne action in a substrate-dependent manner by altering the composition of the degradosome.</text>
</comment>
<comment type="subunit">
    <text evidence="1">Interacts with the C-terminal region of Rne.</text>
</comment>
<comment type="subcellular location">
    <subcellularLocation>
        <location evidence="1">Cytoplasm</location>
    </subcellularLocation>
</comment>
<comment type="similarity">
    <text evidence="1">Belongs to the RraB family.</text>
</comment>